<evidence type="ECO:0000255" key="1">
    <source>
        <dbReference type="HAMAP-Rule" id="MF_03061"/>
    </source>
</evidence>
<evidence type="ECO:0000305" key="2"/>
<proteinExistence type="inferred from homology"/>
<protein>
    <recommendedName>
        <fullName evidence="1">Elongation factor G, mitochondrial</fullName>
        <shortName evidence="1">EF-Gmt</shortName>
    </recommendedName>
    <alternativeName>
        <fullName evidence="1">Elongation factor G 1, mitochondrial</fullName>
        <shortName evidence="1">mEF-G 1</shortName>
    </alternativeName>
    <alternativeName>
        <fullName evidence="1">Elongation factor G1</fullName>
    </alternativeName>
</protein>
<comment type="function">
    <text evidence="1">Mitochondrial GTPase that catalyzes the GTP-dependent ribosomal translocation step during translation elongation. During this step, the ribosome changes from the pre-translocational (PRE) to the post-translocational (POST) state as the newly formed A-site-bound peptidyl-tRNA and P-site-bound deacylated tRNA move to the P and E sites, respectively. Catalyzes the coordinated movement of the two tRNA molecules, the mRNA and conformational changes in the ribosome.</text>
</comment>
<comment type="pathway">
    <text evidence="1">Protein biosynthesis; polypeptide chain elongation.</text>
</comment>
<comment type="subcellular location">
    <subcellularLocation>
        <location evidence="1">Mitochondrion</location>
    </subcellularLocation>
</comment>
<comment type="similarity">
    <text evidence="2">Belongs to the TRAFAC class translation factor GTPase superfamily. Classic translation factor GTPase family. EF-G/EF-2 subfamily.</text>
</comment>
<sequence length="804" mass="88608">MSMHRVARAVASTEACAGALRGSVPRARFLCLNSPVQGLGARNAILGARLGGKRHFSQSPIIRAGVAQAVLEKAAADPSALTQEAIVDNLNAAERDRLRRVRNIGIAAHIDSGKTTATERVLFYTGRINAIHEVRGKDAVGAKMDSMELEREKGITIQSAATFCDWLKVENGKEEKYHINLIDTPGHIDFTIEVERALRVLDGAVMILCAVSGVQSQTITVDRQMRRYNVPRISFINKMDRMGANPFKAVEQINQKLRIPAAALQVPIGSEDSFNGVVDLIRMKAIYNDGPKGEIIRETDEIPEELKKLCEEKRALLIETLADVDDEIAEIFLDEKTPSIEQMKAAIRRATINLKFTPVLMGSALADKSVQPMLDAVCDYLPNPAEVENLALDKRRAEAPVKLVSYNELPFVGLAFKLEESNYGQLTYIRVYQGSLKKGMNVFNARTDKRVKIPRIVRMHSNEMEEVPEIGAGEICAVFGVDCASGDTFTDGGLPYSMSSMFVPDPVISLSIKPKTTKDGSNFSKAMNRFQREDPTFRVHVDAESQETIISGMGELHLDIYVERMRREYKVEVETGKPQVAYRETITEHVVFDHTLKKQTGGAGDYARVVGFLEPIEPGPNGYAPSTFKEEVTGGSISDKFLFACEKGFLASCEKGPLLGHPVLGTHMVVNDGATHMTDSSEMAFKNATQQAFRKAFKEGKPQVLEPLMKTTITAPNEFQGNIVGLLNKRNAIISDTEIGPEDFTLIADCSLNAMFGFSSQLRAATQGKGEFGMEFSHYAPAPGQLQKELISNYEKAQADRHKK</sequence>
<organism>
    <name type="scientific">Botryotinia fuckeliana (strain B05.10)</name>
    <name type="common">Noble rot fungus</name>
    <name type="synonym">Botrytis cinerea</name>
    <dbReference type="NCBI Taxonomy" id="332648"/>
    <lineage>
        <taxon>Eukaryota</taxon>
        <taxon>Fungi</taxon>
        <taxon>Dikarya</taxon>
        <taxon>Ascomycota</taxon>
        <taxon>Pezizomycotina</taxon>
        <taxon>Leotiomycetes</taxon>
        <taxon>Helotiales</taxon>
        <taxon>Sclerotiniaceae</taxon>
        <taxon>Botrytis</taxon>
    </lineage>
</organism>
<name>EFGM_BOTFB</name>
<accession>A6RLH0</accession>
<accession>A0A384JJQ6</accession>
<keyword id="KW-0251">Elongation factor</keyword>
<keyword id="KW-0342">GTP-binding</keyword>
<keyword id="KW-0496">Mitochondrion</keyword>
<keyword id="KW-0547">Nucleotide-binding</keyword>
<keyword id="KW-0648">Protein biosynthesis</keyword>
<keyword id="KW-1185">Reference proteome</keyword>
<keyword id="KW-0809">Transit peptide</keyword>
<gene>
    <name type="primary">mef1</name>
    <name type="ORF">BC1G_01292</name>
    <name type="ORF">BCIN_06g02560</name>
</gene>
<reference key="1">
    <citation type="journal article" date="2011" name="PLoS Genet.">
        <title>Genomic analysis of the necrotrophic fungal pathogens Sclerotinia sclerotiorum and Botrytis cinerea.</title>
        <authorList>
            <person name="Amselem J."/>
            <person name="Cuomo C.A."/>
            <person name="van Kan J.A.L."/>
            <person name="Viaud M."/>
            <person name="Benito E.P."/>
            <person name="Couloux A."/>
            <person name="Coutinho P.M."/>
            <person name="de Vries R.P."/>
            <person name="Dyer P.S."/>
            <person name="Fillinger S."/>
            <person name="Fournier E."/>
            <person name="Gout L."/>
            <person name="Hahn M."/>
            <person name="Kohn L."/>
            <person name="Lapalu N."/>
            <person name="Plummer K.M."/>
            <person name="Pradier J.-M."/>
            <person name="Quevillon E."/>
            <person name="Sharon A."/>
            <person name="Simon A."/>
            <person name="ten Have A."/>
            <person name="Tudzynski B."/>
            <person name="Tudzynski P."/>
            <person name="Wincker P."/>
            <person name="Andrew M."/>
            <person name="Anthouard V."/>
            <person name="Beever R.E."/>
            <person name="Beffa R."/>
            <person name="Benoit I."/>
            <person name="Bouzid O."/>
            <person name="Brault B."/>
            <person name="Chen Z."/>
            <person name="Choquer M."/>
            <person name="Collemare J."/>
            <person name="Cotton P."/>
            <person name="Danchin E.G."/>
            <person name="Da Silva C."/>
            <person name="Gautier A."/>
            <person name="Giraud C."/>
            <person name="Giraud T."/>
            <person name="Gonzalez C."/>
            <person name="Grossetete S."/>
            <person name="Gueldener U."/>
            <person name="Henrissat B."/>
            <person name="Howlett B.J."/>
            <person name="Kodira C."/>
            <person name="Kretschmer M."/>
            <person name="Lappartient A."/>
            <person name="Leroch M."/>
            <person name="Levis C."/>
            <person name="Mauceli E."/>
            <person name="Neuveglise C."/>
            <person name="Oeser B."/>
            <person name="Pearson M."/>
            <person name="Poulain J."/>
            <person name="Poussereau N."/>
            <person name="Quesneville H."/>
            <person name="Rascle C."/>
            <person name="Schumacher J."/>
            <person name="Segurens B."/>
            <person name="Sexton A."/>
            <person name="Silva E."/>
            <person name="Sirven C."/>
            <person name="Soanes D.M."/>
            <person name="Talbot N.J."/>
            <person name="Templeton M."/>
            <person name="Yandava C."/>
            <person name="Yarden O."/>
            <person name="Zeng Q."/>
            <person name="Rollins J.A."/>
            <person name="Lebrun M.-H."/>
            <person name="Dickman M."/>
        </authorList>
    </citation>
    <scope>NUCLEOTIDE SEQUENCE [LARGE SCALE GENOMIC DNA]</scope>
    <source>
        <strain>B05.10</strain>
    </source>
</reference>
<reference key="2">
    <citation type="journal article" date="2012" name="Eukaryot. Cell">
        <title>Genome update of Botrytis cinerea strains B05.10 and T4.</title>
        <authorList>
            <person name="Staats M."/>
            <person name="van Kan J.A.L."/>
        </authorList>
    </citation>
    <scope>NUCLEOTIDE SEQUENCE [LARGE SCALE GENOMIC DNA]</scope>
    <scope>GENOME REANNOTATION</scope>
    <source>
        <strain>B05.10</strain>
    </source>
</reference>
<reference key="3">
    <citation type="journal article" date="2017" name="Mol. Plant Pathol.">
        <title>A gapless genome sequence of the fungus Botrytis cinerea.</title>
        <authorList>
            <person name="van Kan J.A.L."/>
            <person name="Stassen J.H.M."/>
            <person name="Mosbach A."/>
            <person name="van der Lee T.A.J."/>
            <person name="Faino L."/>
            <person name="Farmer A.D."/>
            <person name="Papasotiriou D.G."/>
            <person name="Zhou S."/>
            <person name="Seidl M.F."/>
            <person name="Cottam E."/>
            <person name="Edel D."/>
            <person name="Hahn M."/>
            <person name="Schwartz D.C."/>
            <person name="Dietrich R.A."/>
            <person name="Widdison S."/>
            <person name="Scalliet G."/>
        </authorList>
    </citation>
    <scope>NUCLEOTIDE SEQUENCE [LARGE SCALE GENOMIC DNA]</scope>
    <scope>GENOME REANNOTATION</scope>
    <source>
        <strain>B05.10</strain>
    </source>
</reference>
<dbReference type="EMBL" id="CP009810">
    <property type="protein sequence ID" value="ATZ50770.1"/>
    <property type="molecule type" value="Genomic_DNA"/>
</dbReference>
<dbReference type="SMR" id="A6RLH0"/>
<dbReference type="EnsemblFungi" id="Bcin06g02560.1">
    <property type="protein sequence ID" value="Bcin06p02560.1"/>
    <property type="gene ID" value="Bcin06g02560"/>
</dbReference>
<dbReference type="GeneID" id="5441101"/>
<dbReference type="KEGG" id="bfu:BCIN_06g02560"/>
<dbReference type="VEuPathDB" id="FungiDB:Bcin06g02560"/>
<dbReference type="OMA" id="GQFAKVQ"/>
<dbReference type="OrthoDB" id="198619at2759"/>
<dbReference type="UniPathway" id="UPA00345"/>
<dbReference type="Proteomes" id="UP000001798">
    <property type="component" value="Chromosome bcin06"/>
</dbReference>
<dbReference type="GO" id="GO:0005739">
    <property type="term" value="C:mitochondrion"/>
    <property type="evidence" value="ECO:0007669"/>
    <property type="project" value="UniProtKB-SubCell"/>
</dbReference>
<dbReference type="GO" id="GO:0005525">
    <property type="term" value="F:GTP binding"/>
    <property type="evidence" value="ECO:0007669"/>
    <property type="project" value="UniProtKB-UniRule"/>
</dbReference>
<dbReference type="GO" id="GO:0003924">
    <property type="term" value="F:GTPase activity"/>
    <property type="evidence" value="ECO:0007669"/>
    <property type="project" value="UniProtKB-UniRule"/>
</dbReference>
<dbReference type="GO" id="GO:0003746">
    <property type="term" value="F:translation elongation factor activity"/>
    <property type="evidence" value="ECO:0007669"/>
    <property type="project" value="UniProtKB-UniRule"/>
</dbReference>
<dbReference type="GO" id="GO:0070125">
    <property type="term" value="P:mitochondrial translational elongation"/>
    <property type="evidence" value="ECO:0007669"/>
    <property type="project" value="UniProtKB-UniRule"/>
</dbReference>
<dbReference type="CDD" id="cd01886">
    <property type="entry name" value="EF-G"/>
    <property type="match status" value="1"/>
</dbReference>
<dbReference type="CDD" id="cd16262">
    <property type="entry name" value="EFG_III"/>
    <property type="match status" value="1"/>
</dbReference>
<dbReference type="CDD" id="cd01434">
    <property type="entry name" value="EFG_mtEFG1_IV"/>
    <property type="match status" value="1"/>
</dbReference>
<dbReference type="CDD" id="cd04097">
    <property type="entry name" value="mtEFG1_C"/>
    <property type="match status" value="1"/>
</dbReference>
<dbReference type="CDD" id="cd04091">
    <property type="entry name" value="mtEFG1_II_like"/>
    <property type="match status" value="1"/>
</dbReference>
<dbReference type="FunFam" id="3.30.70.870:FF:000001">
    <property type="entry name" value="Elongation factor G"/>
    <property type="match status" value="1"/>
</dbReference>
<dbReference type="FunFam" id="2.40.30.10:FF:000022">
    <property type="entry name" value="Elongation factor G, mitochondrial"/>
    <property type="match status" value="1"/>
</dbReference>
<dbReference type="FunFam" id="3.30.70.240:FF:000015">
    <property type="entry name" value="Elongation factor G, mitochondrial"/>
    <property type="match status" value="1"/>
</dbReference>
<dbReference type="FunFam" id="3.40.50.300:FF:000558">
    <property type="entry name" value="Elongation factor G, mitochondrial"/>
    <property type="match status" value="1"/>
</dbReference>
<dbReference type="Gene3D" id="3.30.230.10">
    <property type="match status" value="1"/>
</dbReference>
<dbReference type="Gene3D" id="3.30.70.240">
    <property type="match status" value="1"/>
</dbReference>
<dbReference type="Gene3D" id="3.30.70.870">
    <property type="entry name" value="Elongation Factor G (Translational Gtpase), domain 3"/>
    <property type="match status" value="1"/>
</dbReference>
<dbReference type="Gene3D" id="3.40.50.300">
    <property type="entry name" value="P-loop containing nucleotide triphosphate hydrolases"/>
    <property type="match status" value="1"/>
</dbReference>
<dbReference type="Gene3D" id="2.40.30.10">
    <property type="entry name" value="Translation factors"/>
    <property type="match status" value="1"/>
</dbReference>
<dbReference type="HAMAP" id="MF_00054_B">
    <property type="entry name" value="EF_G_EF_2_B"/>
    <property type="match status" value="1"/>
</dbReference>
<dbReference type="InterPro" id="IPR041095">
    <property type="entry name" value="EFG_II"/>
</dbReference>
<dbReference type="InterPro" id="IPR009022">
    <property type="entry name" value="EFG_III"/>
</dbReference>
<dbReference type="InterPro" id="IPR035647">
    <property type="entry name" value="EFG_III/V"/>
</dbReference>
<dbReference type="InterPro" id="IPR047872">
    <property type="entry name" value="EFG_IV"/>
</dbReference>
<dbReference type="InterPro" id="IPR035649">
    <property type="entry name" value="EFG_V"/>
</dbReference>
<dbReference type="InterPro" id="IPR000640">
    <property type="entry name" value="EFG_V-like"/>
</dbReference>
<dbReference type="InterPro" id="IPR004161">
    <property type="entry name" value="EFTu-like_2"/>
</dbReference>
<dbReference type="InterPro" id="IPR031157">
    <property type="entry name" value="G_TR_CS"/>
</dbReference>
<dbReference type="InterPro" id="IPR027417">
    <property type="entry name" value="P-loop_NTPase"/>
</dbReference>
<dbReference type="InterPro" id="IPR020568">
    <property type="entry name" value="Ribosomal_Su5_D2-typ_SF"/>
</dbReference>
<dbReference type="InterPro" id="IPR014721">
    <property type="entry name" value="Ribsml_uS5_D2-typ_fold_subgr"/>
</dbReference>
<dbReference type="InterPro" id="IPR005225">
    <property type="entry name" value="Small_GTP-bd"/>
</dbReference>
<dbReference type="InterPro" id="IPR000795">
    <property type="entry name" value="T_Tr_GTP-bd_dom"/>
</dbReference>
<dbReference type="InterPro" id="IPR009000">
    <property type="entry name" value="Transl_B-barrel_sf"/>
</dbReference>
<dbReference type="InterPro" id="IPR004540">
    <property type="entry name" value="Transl_elong_EFG/EF2"/>
</dbReference>
<dbReference type="InterPro" id="IPR005517">
    <property type="entry name" value="Transl_elong_EFG/EF2_IV"/>
</dbReference>
<dbReference type="NCBIfam" id="TIGR00484">
    <property type="entry name" value="EF-G"/>
    <property type="match status" value="1"/>
</dbReference>
<dbReference type="NCBIfam" id="NF009381">
    <property type="entry name" value="PRK12740.1-5"/>
    <property type="match status" value="1"/>
</dbReference>
<dbReference type="NCBIfam" id="TIGR00231">
    <property type="entry name" value="small_GTP"/>
    <property type="match status" value="1"/>
</dbReference>
<dbReference type="PANTHER" id="PTHR43636">
    <property type="entry name" value="ELONGATION FACTOR G, MITOCHONDRIAL"/>
    <property type="match status" value="1"/>
</dbReference>
<dbReference type="PANTHER" id="PTHR43636:SF2">
    <property type="entry name" value="ELONGATION FACTOR G, MITOCHONDRIAL"/>
    <property type="match status" value="1"/>
</dbReference>
<dbReference type="Pfam" id="PF00679">
    <property type="entry name" value="EFG_C"/>
    <property type="match status" value="1"/>
</dbReference>
<dbReference type="Pfam" id="PF14492">
    <property type="entry name" value="EFG_III"/>
    <property type="match status" value="1"/>
</dbReference>
<dbReference type="Pfam" id="PF03764">
    <property type="entry name" value="EFG_IV"/>
    <property type="match status" value="1"/>
</dbReference>
<dbReference type="Pfam" id="PF00009">
    <property type="entry name" value="GTP_EFTU"/>
    <property type="match status" value="1"/>
</dbReference>
<dbReference type="Pfam" id="PF03144">
    <property type="entry name" value="GTP_EFTU_D2"/>
    <property type="match status" value="1"/>
</dbReference>
<dbReference type="PRINTS" id="PR00315">
    <property type="entry name" value="ELONGATNFCT"/>
</dbReference>
<dbReference type="SMART" id="SM00838">
    <property type="entry name" value="EFG_C"/>
    <property type="match status" value="1"/>
</dbReference>
<dbReference type="SMART" id="SM00889">
    <property type="entry name" value="EFG_IV"/>
    <property type="match status" value="1"/>
</dbReference>
<dbReference type="SUPFAM" id="SSF54980">
    <property type="entry name" value="EF-G C-terminal domain-like"/>
    <property type="match status" value="2"/>
</dbReference>
<dbReference type="SUPFAM" id="SSF52540">
    <property type="entry name" value="P-loop containing nucleoside triphosphate hydrolases"/>
    <property type="match status" value="1"/>
</dbReference>
<dbReference type="SUPFAM" id="SSF54211">
    <property type="entry name" value="Ribosomal protein S5 domain 2-like"/>
    <property type="match status" value="1"/>
</dbReference>
<dbReference type="SUPFAM" id="SSF50447">
    <property type="entry name" value="Translation proteins"/>
    <property type="match status" value="1"/>
</dbReference>
<dbReference type="PROSITE" id="PS00301">
    <property type="entry name" value="G_TR_1"/>
    <property type="match status" value="1"/>
</dbReference>
<dbReference type="PROSITE" id="PS51722">
    <property type="entry name" value="G_TR_2"/>
    <property type="match status" value="1"/>
</dbReference>
<feature type="transit peptide" description="Mitochondrion" evidence="1">
    <location>
        <begin position="1"/>
        <end position="63"/>
    </location>
</feature>
<feature type="chain" id="PRO_0000385563" description="Elongation factor G, mitochondrial">
    <location>
        <begin position="64"/>
        <end position="804"/>
    </location>
</feature>
<feature type="domain" description="tr-type G">
    <location>
        <begin position="99"/>
        <end position="385"/>
    </location>
</feature>
<feature type="binding site" evidence="1">
    <location>
        <begin position="108"/>
        <end position="115"/>
    </location>
    <ligand>
        <name>GTP</name>
        <dbReference type="ChEBI" id="CHEBI:37565"/>
    </ligand>
</feature>
<feature type="binding site" evidence="1">
    <location>
        <begin position="183"/>
        <end position="187"/>
    </location>
    <ligand>
        <name>GTP</name>
        <dbReference type="ChEBI" id="CHEBI:37565"/>
    </ligand>
</feature>
<feature type="binding site" evidence="1">
    <location>
        <begin position="237"/>
        <end position="240"/>
    </location>
    <ligand>
        <name>GTP</name>
        <dbReference type="ChEBI" id="CHEBI:37565"/>
    </ligand>
</feature>